<gene>
    <name evidence="7" type="primary">RR4</name>
    <name evidence="8" type="ORF">OsI_05226</name>
</gene>
<accession>Q4GZK7</accession>
<sequence length="232" mass="24863">MTVVDAESRFHVLAVDDSLIDRKLIEMLLKNSSYQVTTVDSGSKALELLGLRDEGDDSSSSPSSSSPDHQEIDVNLIITDYCMPGMTGYDLLKRVKGSSSLKDIPVVIMSSENVPARINRCLEDGAEEFFLKPVKLADMKKLKSHLLKRKQQLPMAAAAPDKPPHKPDEAAASAAAIAEAATAQTDGIISDCSCSGSSKRKAAAMEQEVISSPDQRTKPRLSSTSSGLAVET</sequence>
<feature type="chain" id="PRO_0000433823" description="Two-component response regulator ORR4">
    <location>
        <begin position="1"/>
        <end position="232"/>
    </location>
</feature>
<feature type="domain" description="Response regulatory" evidence="2">
    <location>
        <begin position="11"/>
        <end position="147"/>
    </location>
</feature>
<feature type="region of interest" description="Disordered" evidence="3">
    <location>
        <begin position="153"/>
        <end position="174"/>
    </location>
</feature>
<feature type="region of interest" description="Disordered" evidence="3">
    <location>
        <begin position="202"/>
        <end position="232"/>
    </location>
</feature>
<feature type="compositionally biased region" description="Polar residues" evidence="3">
    <location>
        <begin position="209"/>
        <end position="232"/>
    </location>
</feature>
<feature type="modified residue" description="4-aspartylphosphate" evidence="2">
    <location>
        <position position="80"/>
    </location>
</feature>
<reference key="1">
    <citation type="journal article" date="2006" name="BMC Plant Biol.">
        <title>Molecular characterization and differential expression of cytokinin-responsive type-A response regulators in rice (Oryza sativa).</title>
        <authorList>
            <person name="Jain M."/>
            <person name="Tyagi A.K."/>
            <person name="Khurana J.P."/>
        </authorList>
    </citation>
    <scope>NUCLEOTIDE SEQUENCE [MRNA]</scope>
    <scope>TISSUE SPECIFICITY</scope>
    <scope>INDUCTION</scope>
    <source>
        <strain>cv. Pusa Basmati</strain>
    </source>
</reference>
<reference key="2">
    <citation type="journal article" date="2005" name="PLoS Biol.">
        <title>The genomes of Oryza sativa: a history of duplications.</title>
        <authorList>
            <person name="Yu J."/>
            <person name="Wang J."/>
            <person name="Lin W."/>
            <person name="Li S."/>
            <person name="Li H."/>
            <person name="Zhou J."/>
            <person name="Ni P."/>
            <person name="Dong W."/>
            <person name="Hu S."/>
            <person name="Zeng C."/>
            <person name="Zhang J."/>
            <person name="Zhang Y."/>
            <person name="Li R."/>
            <person name="Xu Z."/>
            <person name="Li S."/>
            <person name="Li X."/>
            <person name="Zheng H."/>
            <person name="Cong L."/>
            <person name="Lin L."/>
            <person name="Yin J."/>
            <person name="Geng J."/>
            <person name="Li G."/>
            <person name="Shi J."/>
            <person name="Liu J."/>
            <person name="Lv H."/>
            <person name="Li J."/>
            <person name="Wang J."/>
            <person name="Deng Y."/>
            <person name="Ran L."/>
            <person name="Shi X."/>
            <person name="Wang X."/>
            <person name="Wu Q."/>
            <person name="Li C."/>
            <person name="Ren X."/>
            <person name="Wang J."/>
            <person name="Wang X."/>
            <person name="Li D."/>
            <person name="Liu D."/>
            <person name="Zhang X."/>
            <person name="Ji Z."/>
            <person name="Zhao W."/>
            <person name="Sun Y."/>
            <person name="Zhang Z."/>
            <person name="Bao J."/>
            <person name="Han Y."/>
            <person name="Dong L."/>
            <person name="Ji J."/>
            <person name="Chen P."/>
            <person name="Wu S."/>
            <person name="Liu J."/>
            <person name="Xiao Y."/>
            <person name="Bu D."/>
            <person name="Tan J."/>
            <person name="Yang L."/>
            <person name="Ye C."/>
            <person name="Zhang J."/>
            <person name="Xu J."/>
            <person name="Zhou Y."/>
            <person name="Yu Y."/>
            <person name="Zhang B."/>
            <person name="Zhuang S."/>
            <person name="Wei H."/>
            <person name="Liu B."/>
            <person name="Lei M."/>
            <person name="Yu H."/>
            <person name="Li Y."/>
            <person name="Xu H."/>
            <person name="Wei S."/>
            <person name="He X."/>
            <person name="Fang L."/>
            <person name="Zhang Z."/>
            <person name="Zhang Y."/>
            <person name="Huang X."/>
            <person name="Su Z."/>
            <person name="Tong W."/>
            <person name="Li J."/>
            <person name="Tong Z."/>
            <person name="Li S."/>
            <person name="Ye J."/>
            <person name="Wang L."/>
            <person name="Fang L."/>
            <person name="Lei T."/>
            <person name="Chen C.-S."/>
            <person name="Chen H.-C."/>
            <person name="Xu Z."/>
            <person name="Li H."/>
            <person name="Huang H."/>
            <person name="Zhang F."/>
            <person name="Xu H."/>
            <person name="Li N."/>
            <person name="Zhao C."/>
            <person name="Li S."/>
            <person name="Dong L."/>
            <person name="Huang Y."/>
            <person name="Li L."/>
            <person name="Xi Y."/>
            <person name="Qi Q."/>
            <person name="Li W."/>
            <person name="Zhang B."/>
            <person name="Hu W."/>
            <person name="Zhang Y."/>
            <person name="Tian X."/>
            <person name="Jiao Y."/>
            <person name="Liang X."/>
            <person name="Jin J."/>
            <person name="Gao L."/>
            <person name="Zheng W."/>
            <person name="Hao B."/>
            <person name="Liu S.-M."/>
            <person name="Wang W."/>
            <person name="Yuan L."/>
            <person name="Cao M."/>
            <person name="McDermott J."/>
            <person name="Samudrala R."/>
            <person name="Wang J."/>
            <person name="Wong G.K.-S."/>
            <person name="Yang H."/>
        </authorList>
    </citation>
    <scope>NUCLEOTIDE SEQUENCE [LARGE SCALE GENOMIC DNA]</scope>
    <source>
        <strain>cv. 93-11</strain>
    </source>
</reference>
<evidence type="ECO:0000250" key="1">
    <source>
        <dbReference type="UniProtKB" id="Q9ZWS9"/>
    </source>
</evidence>
<evidence type="ECO:0000255" key="2">
    <source>
        <dbReference type="PROSITE-ProRule" id="PRU00169"/>
    </source>
</evidence>
<evidence type="ECO:0000256" key="3">
    <source>
        <dbReference type="SAM" id="MobiDB-lite"/>
    </source>
</evidence>
<evidence type="ECO:0000269" key="4">
    <source>
    </source>
</evidence>
<evidence type="ECO:0000303" key="5">
    <source>
    </source>
</evidence>
<evidence type="ECO:0000305" key="6"/>
<evidence type="ECO:0000312" key="7">
    <source>
        <dbReference type="EMBL" id="CAI79408.1"/>
    </source>
</evidence>
<evidence type="ECO:0000312" key="8">
    <source>
        <dbReference type="EMBL" id="EAY77252.1"/>
    </source>
</evidence>
<keyword id="KW-0932">Cytokinin signaling pathway</keyword>
<keyword id="KW-0597">Phosphoprotein</keyword>
<keyword id="KW-1185">Reference proteome</keyword>
<keyword id="KW-0804">Transcription</keyword>
<keyword id="KW-0805">Transcription regulation</keyword>
<keyword id="KW-0902">Two-component regulatory system</keyword>
<organism>
    <name type="scientific">Oryza sativa subsp. indica</name>
    <name type="common">Rice</name>
    <dbReference type="NCBI Taxonomy" id="39946"/>
    <lineage>
        <taxon>Eukaryota</taxon>
        <taxon>Viridiplantae</taxon>
        <taxon>Streptophyta</taxon>
        <taxon>Embryophyta</taxon>
        <taxon>Tracheophyta</taxon>
        <taxon>Spermatophyta</taxon>
        <taxon>Magnoliopsida</taxon>
        <taxon>Liliopsida</taxon>
        <taxon>Poales</taxon>
        <taxon>Poaceae</taxon>
        <taxon>BOP clade</taxon>
        <taxon>Oryzoideae</taxon>
        <taxon>Oryzeae</taxon>
        <taxon>Oryzinae</taxon>
        <taxon>Oryza</taxon>
        <taxon>Oryza sativa</taxon>
    </lineage>
</organism>
<dbReference type="EMBL" id="AJ938073">
    <property type="protein sequence ID" value="CAI79408.1"/>
    <property type="molecule type" value="mRNA"/>
</dbReference>
<dbReference type="EMBL" id="CM000126">
    <property type="protein sequence ID" value="EAY77252.1"/>
    <property type="molecule type" value="Genomic_DNA"/>
</dbReference>
<dbReference type="SMR" id="Q4GZK7"/>
<dbReference type="STRING" id="39946.Q4GZK7"/>
<dbReference type="EnsemblPlants" id="BGIOSGA005182-TA">
    <property type="protein sequence ID" value="BGIOSGA005182-PA"/>
    <property type="gene ID" value="BGIOSGA005182"/>
</dbReference>
<dbReference type="Gramene" id="BGIOSGA005182-TA">
    <property type="protein sequence ID" value="BGIOSGA005182-PA"/>
    <property type="gene ID" value="BGIOSGA005182"/>
</dbReference>
<dbReference type="HOGENOM" id="CLU_000445_69_5_1"/>
<dbReference type="OMA" id="IANISSX"/>
<dbReference type="Proteomes" id="UP000007015">
    <property type="component" value="Chromosome 1"/>
</dbReference>
<dbReference type="GO" id="GO:0009736">
    <property type="term" value="P:cytokinin-activated signaling pathway"/>
    <property type="evidence" value="ECO:0007669"/>
    <property type="project" value="UniProtKB-KW"/>
</dbReference>
<dbReference type="GO" id="GO:0000160">
    <property type="term" value="P:phosphorelay signal transduction system"/>
    <property type="evidence" value="ECO:0007669"/>
    <property type="project" value="UniProtKB-KW"/>
</dbReference>
<dbReference type="GO" id="GO:0009735">
    <property type="term" value="P:response to cytokinin"/>
    <property type="evidence" value="ECO:0000305"/>
    <property type="project" value="Gramene"/>
</dbReference>
<dbReference type="CDD" id="cd17581">
    <property type="entry name" value="REC_typeA_ARR"/>
    <property type="match status" value="1"/>
</dbReference>
<dbReference type="FunFam" id="3.40.50.2300:FF:000291">
    <property type="entry name" value="Two-component response regulator ORR4"/>
    <property type="match status" value="1"/>
</dbReference>
<dbReference type="Gene3D" id="3.40.50.2300">
    <property type="match status" value="1"/>
</dbReference>
<dbReference type="InterPro" id="IPR045279">
    <property type="entry name" value="ARR-like"/>
</dbReference>
<dbReference type="InterPro" id="IPR011006">
    <property type="entry name" value="CheY-like_superfamily"/>
</dbReference>
<dbReference type="InterPro" id="IPR001789">
    <property type="entry name" value="Sig_transdc_resp-reg_receiver"/>
</dbReference>
<dbReference type="PANTHER" id="PTHR43874">
    <property type="entry name" value="TWO-COMPONENT RESPONSE REGULATOR"/>
    <property type="match status" value="1"/>
</dbReference>
<dbReference type="PANTHER" id="PTHR43874:SF106">
    <property type="entry name" value="TWO-COMPONENT RESPONSE REGULATOR ORR4"/>
    <property type="match status" value="1"/>
</dbReference>
<dbReference type="Pfam" id="PF00072">
    <property type="entry name" value="Response_reg"/>
    <property type="match status" value="1"/>
</dbReference>
<dbReference type="SMART" id="SM00448">
    <property type="entry name" value="REC"/>
    <property type="match status" value="1"/>
</dbReference>
<dbReference type="SUPFAM" id="SSF52172">
    <property type="entry name" value="CheY-like"/>
    <property type="match status" value="1"/>
</dbReference>
<dbReference type="PROSITE" id="PS50110">
    <property type="entry name" value="RESPONSE_REGULATORY"/>
    <property type="match status" value="1"/>
</dbReference>
<comment type="function">
    <text evidence="1">Functions as a response regulator involved in His-to-Asp phosphorelay signal transduction system. Phosphorylation of the Asp residue in the receiver domain activates the ability of the protein to promote the transcription of target genes. Type-A response regulators seem to act as negative regulators of the cytokinin signaling.</text>
</comment>
<comment type="tissue specificity">
    <text evidence="4">Expressed in mature leaves and flowers, and at low levels in roots and shoots.</text>
</comment>
<comment type="induction">
    <text evidence="4">By cytokinin.</text>
</comment>
<comment type="PTM">
    <text evidence="6">Two-component system major event consists of a His-to-Asp phosphorelay between a sensor histidine kinase (HK) and a response regulator (RR). In plants, the His-to-Asp phosphorelay involves an additional intermediate named Histidine-containing phosphotransfer protein (HPt). This multistep phosphorelay consists of a His-Asp-His-Asp sequential transfer of a phosphate group between first a His and an Asp of the HK protein, followed by the transfer to a conserved His of the HPt protein and finally the transfer to an Asp in the receiver domain of the RR protein.</text>
</comment>
<comment type="similarity">
    <text evidence="6">Belongs to the ARR family. Type-A subfamily.</text>
</comment>
<proteinExistence type="evidence at transcript level"/>
<name>ORR4_ORYSI</name>
<protein>
    <recommendedName>
        <fullName evidence="6">Two-component response regulator ORR4</fullName>
    </recommendedName>
    <alternativeName>
        <fullName evidence="5">Type A response regulator 4</fullName>
        <shortName evidence="5">OsRR4</shortName>
    </alternativeName>
</protein>